<organism>
    <name type="scientific">Bacillus subtilis (strain 168)</name>
    <dbReference type="NCBI Taxonomy" id="224308"/>
    <lineage>
        <taxon>Bacteria</taxon>
        <taxon>Bacillati</taxon>
        <taxon>Bacillota</taxon>
        <taxon>Bacilli</taxon>
        <taxon>Bacillales</taxon>
        <taxon>Bacillaceae</taxon>
        <taxon>Bacillus</taxon>
    </lineage>
</organism>
<comment type="catalytic activity">
    <reaction>
        <text>a uridine in RNA = a pseudouridine in RNA</text>
        <dbReference type="Rhea" id="RHEA:48348"/>
        <dbReference type="Rhea" id="RHEA-COMP:12068"/>
        <dbReference type="Rhea" id="RHEA-COMP:12069"/>
        <dbReference type="ChEBI" id="CHEBI:65314"/>
        <dbReference type="ChEBI" id="CHEBI:65315"/>
    </reaction>
</comment>
<comment type="similarity">
    <text evidence="4">Belongs to the pseudouridine synthase RluA family.</text>
</comment>
<dbReference type="EC" id="5.4.99.-"/>
<dbReference type="EMBL" id="X96983">
    <property type="protein sequence ID" value="CAA65704.1"/>
    <property type="molecule type" value="Genomic_DNA"/>
</dbReference>
<dbReference type="EMBL" id="AL009126">
    <property type="protein sequence ID" value="CAB12749.2"/>
    <property type="molecule type" value="Genomic_DNA"/>
</dbReference>
<dbReference type="PIR" id="H69823">
    <property type="entry name" value="H69823"/>
</dbReference>
<dbReference type="RefSeq" id="NP_388802.2">
    <property type="nucleotide sequence ID" value="NC_000964.3"/>
</dbReference>
<dbReference type="RefSeq" id="WP_003244785.1">
    <property type="nucleotide sequence ID" value="NZ_OZ025638.1"/>
</dbReference>
<dbReference type="SMR" id="P54604"/>
<dbReference type="FunCoup" id="P54604">
    <property type="interactions" value="370"/>
</dbReference>
<dbReference type="STRING" id="224308.BSU09210"/>
<dbReference type="PaxDb" id="224308-BSU09210"/>
<dbReference type="EnsemblBacteria" id="CAB12749">
    <property type="protein sequence ID" value="CAB12749"/>
    <property type="gene ID" value="BSU_09210"/>
</dbReference>
<dbReference type="GeneID" id="936253"/>
<dbReference type="KEGG" id="bsu:BSU09210"/>
<dbReference type="PATRIC" id="fig|224308.179.peg.993"/>
<dbReference type="eggNOG" id="COG0564">
    <property type="taxonomic scope" value="Bacteria"/>
</dbReference>
<dbReference type="InParanoid" id="P54604"/>
<dbReference type="OrthoDB" id="9807829at2"/>
<dbReference type="BioCyc" id="BSUB:BSU09210-MONOMER"/>
<dbReference type="Proteomes" id="UP000001570">
    <property type="component" value="Chromosome"/>
</dbReference>
<dbReference type="GO" id="GO:0009982">
    <property type="term" value="F:pseudouridine synthase activity"/>
    <property type="evidence" value="ECO:0000318"/>
    <property type="project" value="GO_Central"/>
</dbReference>
<dbReference type="GO" id="GO:0003723">
    <property type="term" value="F:RNA binding"/>
    <property type="evidence" value="ECO:0007669"/>
    <property type="project" value="UniProtKB-KW"/>
</dbReference>
<dbReference type="GO" id="GO:0120159">
    <property type="term" value="F:rRNA pseudouridine synthase activity"/>
    <property type="evidence" value="ECO:0007669"/>
    <property type="project" value="UniProtKB-ARBA"/>
</dbReference>
<dbReference type="GO" id="GO:0000455">
    <property type="term" value="P:enzyme-directed rRNA pseudouridine synthesis"/>
    <property type="evidence" value="ECO:0000318"/>
    <property type="project" value="GO_Central"/>
</dbReference>
<dbReference type="CDD" id="cd02869">
    <property type="entry name" value="PseudoU_synth_RluA_like"/>
    <property type="match status" value="1"/>
</dbReference>
<dbReference type="FunFam" id="3.30.2350.10:FF:000005">
    <property type="entry name" value="Pseudouridine synthase"/>
    <property type="match status" value="1"/>
</dbReference>
<dbReference type="Gene3D" id="3.30.2350.10">
    <property type="entry name" value="Pseudouridine synthase"/>
    <property type="match status" value="1"/>
</dbReference>
<dbReference type="InterPro" id="IPR020103">
    <property type="entry name" value="PsdUridine_synth_cat_dom_sf"/>
</dbReference>
<dbReference type="InterPro" id="IPR006224">
    <property type="entry name" value="PsdUridine_synth_RluA-like_CS"/>
</dbReference>
<dbReference type="InterPro" id="IPR006225">
    <property type="entry name" value="PsdUridine_synth_RluC/D"/>
</dbReference>
<dbReference type="InterPro" id="IPR006145">
    <property type="entry name" value="PsdUridine_synth_RsuA/RluA"/>
</dbReference>
<dbReference type="InterPro" id="IPR050188">
    <property type="entry name" value="RluA_PseudoU_synthase"/>
</dbReference>
<dbReference type="InterPro" id="IPR002942">
    <property type="entry name" value="S4_RNA-bd"/>
</dbReference>
<dbReference type="NCBIfam" id="TIGR00005">
    <property type="entry name" value="rluA_subfam"/>
    <property type="match status" value="1"/>
</dbReference>
<dbReference type="PANTHER" id="PTHR21600">
    <property type="entry name" value="MITOCHONDRIAL RNA PSEUDOURIDINE SYNTHASE"/>
    <property type="match status" value="1"/>
</dbReference>
<dbReference type="PANTHER" id="PTHR21600:SF71">
    <property type="entry name" value="PSEUDOURIDINE SYNTHASE"/>
    <property type="match status" value="1"/>
</dbReference>
<dbReference type="Pfam" id="PF00849">
    <property type="entry name" value="PseudoU_synth_2"/>
    <property type="match status" value="1"/>
</dbReference>
<dbReference type="Pfam" id="PF01479">
    <property type="entry name" value="S4"/>
    <property type="match status" value="1"/>
</dbReference>
<dbReference type="SMART" id="SM00363">
    <property type="entry name" value="S4"/>
    <property type="match status" value="1"/>
</dbReference>
<dbReference type="SUPFAM" id="SSF55120">
    <property type="entry name" value="Pseudouridine synthase"/>
    <property type="match status" value="1"/>
</dbReference>
<dbReference type="PROSITE" id="PS01129">
    <property type="entry name" value="PSI_RLU"/>
    <property type="match status" value="1"/>
</dbReference>
<dbReference type="PROSITE" id="PS50889">
    <property type="entry name" value="S4"/>
    <property type="match status" value="1"/>
</dbReference>
<evidence type="ECO:0000250" key="1"/>
<evidence type="ECO:0000255" key="2">
    <source>
        <dbReference type="PROSITE-ProRule" id="PRU00182"/>
    </source>
</evidence>
<evidence type="ECO:0000256" key="3">
    <source>
        <dbReference type="SAM" id="MobiDB-lite"/>
    </source>
</evidence>
<evidence type="ECO:0000305" key="4"/>
<sequence length="302" mass="33731">MNQKGRGLEILINEKQDGQWLFSVLKTALKASKPVIQDWMSHQQIKVNHESVLNNMIVKKGDRVFIDLQESEASSVIPEYGELDILFEDNHMLIINKPAGIATHPNEDGQTGTLANLIAYHYQINGETCKVRHVHRLDQDTSGAIVFAKHRLAHAILDQQLEKKTLKRTYTAIAEGKLRTKKGTINSPIGRDRSHPTRRRVSPGGQTAVTHFKVMASNAKERLSLVELELETGRTHQIRVHLASLGHPLTGDSLYGGGSKLLNRQALHANKVQAVHPITDELIVAEAPFPADMKNLCRTYFS</sequence>
<gene>
    <name type="primary">yhcT</name>
    <name type="ordered locus">BSU09210</name>
</gene>
<reference key="1">
    <citation type="journal article" date="1996" name="Microbiology">
        <title>A 22 kb DNA sequence in the cspB-glpPFKD region at 75 degrees on the Bacillus subtilis chromosome.</title>
        <authorList>
            <person name="Noback M.A."/>
            <person name="Terpstra P."/>
            <person name="Holsappel S."/>
            <person name="Venema G."/>
            <person name="Bron S."/>
        </authorList>
    </citation>
    <scope>NUCLEOTIDE SEQUENCE [GENOMIC DNA]</scope>
    <source>
        <strain>168</strain>
    </source>
</reference>
<reference key="2">
    <citation type="journal article" date="1997" name="Nature">
        <title>The complete genome sequence of the Gram-positive bacterium Bacillus subtilis.</title>
        <authorList>
            <person name="Kunst F."/>
            <person name="Ogasawara N."/>
            <person name="Moszer I."/>
            <person name="Albertini A.M."/>
            <person name="Alloni G."/>
            <person name="Azevedo V."/>
            <person name="Bertero M.G."/>
            <person name="Bessieres P."/>
            <person name="Bolotin A."/>
            <person name="Borchert S."/>
            <person name="Borriss R."/>
            <person name="Boursier L."/>
            <person name="Brans A."/>
            <person name="Braun M."/>
            <person name="Brignell S.C."/>
            <person name="Bron S."/>
            <person name="Brouillet S."/>
            <person name="Bruschi C.V."/>
            <person name="Caldwell B."/>
            <person name="Capuano V."/>
            <person name="Carter N.M."/>
            <person name="Choi S.-K."/>
            <person name="Codani J.-J."/>
            <person name="Connerton I.F."/>
            <person name="Cummings N.J."/>
            <person name="Daniel R.A."/>
            <person name="Denizot F."/>
            <person name="Devine K.M."/>
            <person name="Duesterhoeft A."/>
            <person name="Ehrlich S.D."/>
            <person name="Emmerson P.T."/>
            <person name="Entian K.-D."/>
            <person name="Errington J."/>
            <person name="Fabret C."/>
            <person name="Ferrari E."/>
            <person name="Foulger D."/>
            <person name="Fritz C."/>
            <person name="Fujita M."/>
            <person name="Fujita Y."/>
            <person name="Fuma S."/>
            <person name="Galizzi A."/>
            <person name="Galleron N."/>
            <person name="Ghim S.-Y."/>
            <person name="Glaser P."/>
            <person name="Goffeau A."/>
            <person name="Golightly E.J."/>
            <person name="Grandi G."/>
            <person name="Guiseppi G."/>
            <person name="Guy B.J."/>
            <person name="Haga K."/>
            <person name="Haiech J."/>
            <person name="Harwood C.R."/>
            <person name="Henaut A."/>
            <person name="Hilbert H."/>
            <person name="Holsappel S."/>
            <person name="Hosono S."/>
            <person name="Hullo M.-F."/>
            <person name="Itaya M."/>
            <person name="Jones L.-M."/>
            <person name="Joris B."/>
            <person name="Karamata D."/>
            <person name="Kasahara Y."/>
            <person name="Klaerr-Blanchard M."/>
            <person name="Klein C."/>
            <person name="Kobayashi Y."/>
            <person name="Koetter P."/>
            <person name="Koningstein G."/>
            <person name="Krogh S."/>
            <person name="Kumano M."/>
            <person name="Kurita K."/>
            <person name="Lapidus A."/>
            <person name="Lardinois S."/>
            <person name="Lauber J."/>
            <person name="Lazarevic V."/>
            <person name="Lee S.-M."/>
            <person name="Levine A."/>
            <person name="Liu H."/>
            <person name="Masuda S."/>
            <person name="Mauel C."/>
            <person name="Medigue C."/>
            <person name="Medina N."/>
            <person name="Mellado R.P."/>
            <person name="Mizuno M."/>
            <person name="Moestl D."/>
            <person name="Nakai S."/>
            <person name="Noback M."/>
            <person name="Noone D."/>
            <person name="O'Reilly M."/>
            <person name="Ogawa K."/>
            <person name="Ogiwara A."/>
            <person name="Oudega B."/>
            <person name="Park S.-H."/>
            <person name="Parro V."/>
            <person name="Pohl T.M."/>
            <person name="Portetelle D."/>
            <person name="Porwollik S."/>
            <person name="Prescott A.M."/>
            <person name="Presecan E."/>
            <person name="Pujic P."/>
            <person name="Purnelle B."/>
            <person name="Rapoport G."/>
            <person name="Rey M."/>
            <person name="Reynolds S."/>
            <person name="Rieger M."/>
            <person name="Rivolta C."/>
            <person name="Rocha E."/>
            <person name="Roche B."/>
            <person name="Rose M."/>
            <person name="Sadaie Y."/>
            <person name="Sato T."/>
            <person name="Scanlan E."/>
            <person name="Schleich S."/>
            <person name="Schroeter R."/>
            <person name="Scoffone F."/>
            <person name="Sekiguchi J."/>
            <person name="Sekowska A."/>
            <person name="Seror S.J."/>
            <person name="Serror P."/>
            <person name="Shin B.-S."/>
            <person name="Soldo B."/>
            <person name="Sorokin A."/>
            <person name="Tacconi E."/>
            <person name="Takagi T."/>
            <person name="Takahashi H."/>
            <person name="Takemaru K."/>
            <person name="Takeuchi M."/>
            <person name="Tamakoshi A."/>
            <person name="Tanaka T."/>
            <person name="Terpstra P."/>
            <person name="Tognoni A."/>
            <person name="Tosato V."/>
            <person name="Uchiyama S."/>
            <person name="Vandenbol M."/>
            <person name="Vannier F."/>
            <person name="Vassarotti A."/>
            <person name="Viari A."/>
            <person name="Wambutt R."/>
            <person name="Wedler E."/>
            <person name="Wedler H."/>
            <person name="Weitzenegger T."/>
            <person name="Winters P."/>
            <person name="Wipat A."/>
            <person name="Yamamoto H."/>
            <person name="Yamane K."/>
            <person name="Yasumoto K."/>
            <person name="Yata K."/>
            <person name="Yoshida K."/>
            <person name="Yoshikawa H.-F."/>
            <person name="Zumstein E."/>
            <person name="Yoshikawa H."/>
            <person name="Danchin A."/>
        </authorList>
    </citation>
    <scope>NUCLEOTIDE SEQUENCE [LARGE SCALE GENOMIC DNA]</scope>
    <source>
        <strain>168</strain>
    </source>
</reference>
<reference key="3">
    <citation type="journal article" date="2009" name="Microbiology">
        <title>From a consortium sequence to a unified sequence: the Bacillus subtilis 168 reference genome a decade later.</title>
        <authorList>
            <person name="Barbe V."/>
            <person name="Cruveiller S."/>
            <person name="Kunst F."/>
            <person name="Lenoble P."/>
            <person name="Meurice G."/>
            <person name="Sekowska A."/>
            <person name="Vallenet D."/>
            <person name="Wang T."/>
            <person name="Moszer I."/>
            <person name="Medigue C."/>
            <person name="Danchin A."/>
        </authorList>
    </citation>
    <scope>SEQUENCE REVISION TO 187</scope>
</reference>
<keyword id="KW-0413">Isomerase</keyword>
<keyword id="KW-1185">Reference proteome</keyword>
<keyword id="KW-0694">RNA-binding</keyword>
<protein>
    <recommendedName>
        <fullName>Uncharacterized RNA pseudouridine synthase YhcT</fullName>
        <ecNumber>5.4.99.-</ecNumber>
    </recommendedName>
    <alternativeName>
        <fullName>RNA pseudouridylate synthase</fullName>
    </alternativeName>
    <alternativeName>
        <fullName>RNA-uridine isomerase</fullName>
    </alternativeName>
</protein>
<feature type="chain" id="PRO_0000162728" description="Uncharacterized RNA pseudouridine synthase YhcT">
    <location>
        <begin position="1"/>
        <end position="302"/>
    </location>
</feature>
<feature type="domain" description="S4 RNA-binding" evidence="2">
    <location>
        <begin position="19"/>
        <end position="90"/>
    </location>
</feature>
<feature type="region of interest" description="Disordered" evidence="3">
    <location>
        <begin position="182"/>
        <end position="205"/>
    </location>
</feature>
<feature type="active site" evidence="1">
    <location>
        <position position="138"/>
    </location>
</feature>
<feature type="sequence conflict" description="In Ref. 1; CAA65704." evidence="4" ref="1">
    <original>S</original>
    <variation>P</variation>
    <location>
        <position position="187"/>
    </location>
</feature>
<proteinExistence type="inferred from homology"/>
<accession>P54604</accession>
<name>YHCT_BACSU</name>